<organism>
    <name type="scientific">Leifsonia xyli subsp. xyli (strain CTCB07)</name>
    <dbReference type="NCBI Taxonomy" id="281090"/>
    <lineage>
        <taxon>Bacteria</taxon>
        <taxon>Bacillati</taxon>
        <taxon>Actinomycetota</taxon>
        <taxon>Actinomycetes</taxon>
        <taxon>Micrococcales</taxon>
        <taxon>Microbacteriaceae</taxon>
        <taxon>Leifsonia</taxon>
    </lineage>
</organism>
<reference key="1">
    <citation type="journal article" date="2004" name="Mol. Plant Microbe Interact.">
        <title>The genome sequence of the Gram-positive sugarcane pathogen Leifsonia xyli subsp. xyli.</title>
        <authorList>
            <person name="Monteiro-Vitorello C.B."/>
            <person name="Camargo L.E.A."/>
            <person name="Van Sluys M.A."/>
            <person name="Kitajima J.P."/>
            <person name="Truffi D."/>
            <person name="do Amaral A.M."/>
            <person name="Harakava R."/>
            <person name="de Oliveira J.C.F."/>
            <person name="Wood D."/>
            <person name="de Oliveira M.C."/>
            <person name="Miyaki C.Y."/>
            <person name="Takita M.A."/>
            <person name="da Silva A.C.R."/>
            <person name="Furlan L.R."/>
            <person name="Carraro D.M."/>
            <person name="Camarotte G."/>
            <person name="Almeida N.F. Jr."/>
            <person name="Carrer H."/>
            <person name="Coutinho L.L."/>
            <person name="El-Dorry H.A."/>
            <person name="Ferro M.I.T."/>
            <person name="Gagliardi P.R."/>
            <person name="Giglioti E."/>
            <person name="Goldman M.H.S."/>
            <person name="Goldman G.H."/>
            <person name="Kimura E.T."/>
            <person name="Ferro E.S."/>
            <person name="Kuramae E.E."/>
            <person name="Lemos E.G.M."/>
            <person name="Lemos M.V.F."/>
            <person name="Mauro S.M.Z."/>
            <person name="Machado M.A."/>
            <person name="Marino C.L."/>
            <person name="Menck C.F."/>
            <person name="Nunes L.R."/>
            <person name="Oliveira R.C."/>
            <person name="Pereira G.G."/>
            <person name="Siqueira W."/>
            <person name="de Souza A.A."/>
            <person name="Tsai S.M."/>
            <person name="Zanca A.S."/>
            <person name="Simpson A.J.G."/>
            <person name="Brumbley S.M."/>
            <person name="Setubal J.C."/>
        </authorList>
    </citation>
    <scope>NUCLEOTIDE SEQUENCE [LARGE SCALE GENOMIC DNA]</scope>
    <source>
        <strain>CTCB07</strain>
    </source>
</reference>
<accession>Q6AED3</accession>
<name>LEU1_LEIXX</name>
<protein>
    <recommendedName>
        <fullName evidence="1">2-isopropylmalate synthase</fullName>
        <ecNumber evidence="1">2.3.3.13</ecNumber>
    </recommendedName>
    <alternativeName>
        <fullName evidence="1">Alpha-IPM synthase</fullName>
    </alternativeName>
    <alternativeName>
        <fullName evidence="1">Alpha-isopropylmalate synthase</fullName>
    </alternativeName>
</protein>
<gene>
    <name evidence="1" type="primary">leuA</name>
    <name type="ordered locus">Lxx14490</name>
</gene>
<feature type="chain" id="PRO_1000129507" description="2-isopropylmalate synthase">
    <location>
        <begin position="1"/>
        <end position="590"/>
    </location>
</feature>
<feature type="domain" description="Pyruvate carboxyltransferase" evidence="1">
    <location>
        <begin position="40"/>
        <end position="314"/>
    </location>
</feature>
<feature type="region of interest" description="Regulatory domain" evidence="1">
    <location>
        <begin position="456"/>
        <end position="590"/>
    </location>
</feature>
<feature type="binding site" evidence="1">
    <location>
        <position position="49"/>
    </location>
    <ligand>
        <name>Mg(2+)</name>
        <dbReference type="ChEBI" id="CHEBI:18420"/>
    </ligand>
</feature>
<feature type="binding site" evidence="1">
    <location>
        <position position="253"/>
    </location>
    <ligand>
        <name>Mg(2+)</name>
        <dbReference type="ChEBI" id="CHEBI:18420"/>
    </ligand>
</feature>
<feature type="binding site" evidence="1">
    <location>
        <position position="255"/>
    </location>
    <ligand>
        <name>Mg(2+)</name>
        <dbReference type="ChEBI" id="CHEBI:18420"/>
    </ligand>
</feature>
<feature type="binding site" evidence="1">
    <location>
        <position position="289"/>
    </location>
    <ligand>
        <name>Mg(2+)</name>
        <dbReference type="ChEBI" id="CHEBI:18420"/>
    </ligand>
</feature>
<evidence type="ECO:0000255" key="1">
    <source>
        <dbReference type="HAMAP-Rule" id="MF_00572"/>
    </source>
</evidence>
<dbReference type="EC" id="2.3.3.13" evidence="1"/>
<dbReference type="EMBL" id="AE016822">
    <property type="protein sequence ID" value="AAT89263.1"/>
    <property type="molecule type" value="Genomic_DNA"/>
</dbReference>
<dbReference type="RefSeq" id="WP_041767574.1">
    <property type="nucleotide sequence ID" value="NC_006087.1"/>
</dbReference>
<dbReference type="SMR" id="Q6AED3"/>
<dbReference type="STRING" id="281090.Lxx14490"/>
<dbReference type="KEGG" id="lxx:Lxx14490"/>
<dbReference type="eggNOG" id="COG0119">
    <property type="taxonomic scope" value="Bacteria"/>
</dbReference>
<dbReference type="HOGENOM" id="CLU_004588_3_0_11"/>
<dbReference type="UniPathway" id="UPA00048">
    <property type="reaction ID" value="UER00070"/>
</dbReference>
<dbReference type="Proteomes" id="UP000001306">
    <property type="component" value="Chromosome"/>
</dbReference>
<dbReference type="GO" id="GO:0005737">
    <property type="term" value="C:cytoplasm"/>
    <property type="evidence" value="ECO:0007669"/>
    <property type="project" value="UniProtKB-SubCell"/>
</dbReference>
<dbReference type="GO" id="GO:0003852">
    <property type="term" value="F:2-isopropylmalate synthase activity"/>
    <property type="evidence" value="ECO:0007669"/>
    <property type="project" value="UniProtKB-UniRule"/>
</dbReference>
<dbReference type="GO" id="GO:0003985">
    <property type="term" value="F:acetyl-CoA C-acetyltransferase activity"/>
    <property type="evidence" value="ECO:0007669"/>
    <property type="project" value="UniProtKB-UniRule"/>
</dbReference>
<dbReference type="GO" id="GO:0000287">
    <property type="term" value="F:magnesium ion binding"/>
    <property type="evidence" value="ECO:0007669"/>
    <property type="project" value="UniProtKB-UniRule"/>
</dbReference>
<dbReference type="GO" id="GO:0009098">
    <property type="term" value="P:L-leucine biosynthetic process"/>
    <property type="evidence" value="ECO:0007669"/>
    <property type="project" value="UniProtKB-UniRule"/>
</dbReference>
<dbReference type="CDD" id="cd07942">
    <property type="entry name" value="DRE_TIM_LeuA"/>
    <property type="match status" value="1"/>
</dbReference>
<dbReference type="FunFam" id="3.20.20.70:FF:000045">
    <property type="entry name" value="2-isopropylmalate synthase"/>
    <property type="match status" value="1"/>
</dbReference>
<dbReference type="Gene3D" id="3.30.160.270">
    <property type="match status" value="1"/>
</dbReference>
<dbReference type="Gene3D" id="3.20.20.70">
    <property type="entry name" value="Aldolase class I"/>
    <property type="match status" value="1"/>
</dbReference>
<dbReference type="HAMAP" id="MF_00572">
    <property type="entry name" value="LeuA_type2"/>
    <property type="match status" value="1"/>
</dbReference>
<dbReference type="InterPro" id="IPR013709">
    <property type="entry name" value="2-isopropylmalate_synth_dimer"/>
</dbReference>
<dbReference type="InterPro" id="IPR002034">
    <property type="entry name" value="AIPM/Hcit_synth_CS"/>
</dbReference>
<dbReference type="InterPro" id="IPR013785">
    <property type="entry name" value="Aldolase_TIM"/>
</dbReference>
<dbReference type="InterPro" id="IPR005668">
    <property type="entry name" value="IPM_Synthase"/>
</dbReference>
<dbReference type="InterPro" id="IPR054692">
    <property type="entry name" value="LeuA-like_post-cat"/>
</dbReference>
<dbReference type="InterPro" id="IPR036230">
    <property type="entry name" value="LeuA_allosteric_dom_sf"/>
</dbReference>
<dbReference type="InterPro" id="IPR039371">
    <property type="entry name" value="LeuA_N_DRE-TIM"/>
</dbReference>
<dbReference type="InterPro" id="IPR000891">
    <property type="entry name" value="PYR_CT"/>
</dbReference>
<dbReference type="NCBIfam" id="TIGR00970">
    <property type="entry name" value="leuA_yeast"/>
    <property type="match status" value="1"/>
</dbReference>
<dbReference type="NCBIfam" id="NF002991">
    <property type="entry name" value="PRK03739.1"/>
    <property type="match status" value="1"/>
</dbReference>
<dbReference type="PANTHER" id="PTHR46911">
    <property type="match status" value="1"/>
</dbReference>
<dbReference type="PANTHER" id="PTHR46911:SF1">
    <property type="entry name" value="2-ISOPROPYLMALATE SYNTHASE"/>
    <property type="match status" value="1"/>
</dbReference>
<dbReference type="Pfam" id="PF00682">
    <property type="entry name" value="HMGL-like"/>
    <property type="match status" value="1"/>
</dbReference>
<dbReference type="Pfam" id="PF22615">
    <property type="entry name" value="IPMS_D2"/>
    <property type="match status" value="1"/>
</dbReference>
<dbReference type="Pfam" id="PF08502">
    <property type="entry name" value="LeuA_dimer"/>
    <property type="match status" value="1"/>
</dbReference>
<dbReference type="SMART" id="SM00917">
    <property type="entry name" value="LeuA_dimer"/>
    <property type="match status" value="1"/>
</dbReference>
<dbReference type="SUPFAM" id="SSF110921">
    <property type="entry name" value="2-isopropylmalate synthase LeuA, allosteric (dimerisation) domain"/>
    <property type="match status" value="1"/>
</dbReference>
<dbReference type="SUPFAM" id="SSF51569">
    <property type="entry name" value="Aldolase"/>
    <property type="match status" value="1"/>
</dbReference>
<dbReference type="SUPFAM" id="SSF89000">
    <property type="entry name" value="post-HMGL domain-like"/>
    <property type="match status" value="1"/>
</dbReference>
<dbReference type="PROSITE" id="PS00815">
    <property type="entry name" value="AIPM_HOMOCIT_SYNTH_1"/>
    <property type="match status" value="1"/>
</dbReference>
<dbReference type="PROSITE" id="PS00816">
    <property type="entry name" value="AIPM_HOMOCIT_SYNTH_2"/>
    <property type="match status" value="1"/>
</dbReference>
<dbReference type="PROSITE" id="PS50991">
    <property type="entry name" value="PYR_CT"/>
    <property type="match status" value="1"/>
</dbReference>
<comment type="function">
    <text evidence="1">Catalyzes the condensation of the acetyl group of acetyl-CoA with 3-methyl-2-oxobutanoate (2-ketoisovalerate) to form 3-carboxy-3-hydroxy-4-methylpentanoate (2-isopropylmalate).</text>
</comment>
<comment type="catalytic activity">
    <reaction evidence="1">
        <text>3-methyl-2-oxobutanoate + acetyl-CoA + H2O = (2S)-2-isopropylmalate + CoA + H(+)</text>
        <dbReference type="Rhea" id="RHEA:21524"/>
        <dbReference type="ChEBI" id="CHEBI:1178"/>
        <dbReference type="ChEBI" id="CHEBI:11851"/>
        <dbReference type="ChEBI" id="CHEBI:15377"/>
        <dbReference type="ChEBI" id="CHEBI:15378"/>
        <dbReference type="ChEBI" id="CHEBI:57287"/>
        <dbReference type="ChEBI" id="CHEBI:57288"/>
        <dbReference type="EC" id="2.3.3.13"/>
    </reaction>
</comment>
<comment type="cofactor">
    <cofactor evidence="1">
        <name>Mg(2+)</name>
        <dbReference type="ChEBI" id="CHEBI:18420"/>
    </cofactor>
</comment>
<comment type="pathway">
    <text evidence="1">Amino-acid biosynthesis; L-leucine biosynthesis; L-leucine from 3-methyl-2-oxobutanoate: step 1/4.</text>
</comment>
<comment type="subunit">
    <text evidence="1">Homodimer.</text>
</comment>
<comment type="subcellular location">
    <subcellularLocation>
        <location evidence="1">Cytoplasm</location>
    </subcellularLocation>
</comment>
<comment type="similarity">
    <text evidence="1">Belongs to the alpha-IPM synthase/homocitrate synthase family. LeuA type 2 subfamily.</text>
</comment>
<sequence>MKNTQAPSAMPIHKYRPFHEQIAVDLPDRTWPAKRIAVAPRWCAVDLRDGNQALIDPMSPERKRIMFDLLVRMGYKEIEVGFPSASQTDFDFVRSLIEENAIPDDVTIQVLTQAREHLIKRTYDSLVGAKRAIVHLYNSTSVLQREVVFRSDRQGIVDIALAGARLCRQFEALAPGTEIYYEYSPESYTGTELEFAADICNQALEVFEPTPERKVIINLPATVEMATPNVYADSIEWMSRHLNHRENVILSLHPHNDRGTAVAAAELGYLAGADRIEGCLFGNGERTGNVDLVTLGVNLFTQGIDPQIDFSDIDHIKRTVEHCNQLPVGERSPWGGDLVFTAFSGSHQDAIKKGFEAMAARAQRESVDVDDLVWAVPYLPIDPKDLGRSYEAVIRVNSQSGKGGVAYLLKSDHALDLPRKLQIEFSGVVQAKTDAEGGEVTSNEIWAIFQDEYLPAPETESDAKWGRFELGSTSTANENGDHVTLTVTLRDGETVSKATGEGNGPIAAFFDILNARGINVHLYDYSQHTLSASESATAAAYVEVNVDGRRLWGVGIDADTTTASFKAVISAVNRSVRASASSVPAELAGV</sequence>
<keyword id="KW-0028">Amino-acid biosynthesis</keyword>
<keyword id="KW-0100">Branched-chain amino acid biosynthesis</keyword>
<keyword id="KW-0963">Cytoplasm</keyword>
<keyword id="KW-0432">Leucine biosynthesis</keyword>
<keyword id="KW-0460">Magnesium</keyword>
<keyword id="KW-0479">Metal-binding</keyword>
<keyword id="KW-1185">Reference proteome</keyword>
<keyword id="KW-0808">Transferase</keyword>
<proteinExistence type="inferred from homology"/>